<comment type="function">
    <text evidence="1">Catalyzes the stereoinversion of LL-2,6-diaminopimelate (L,L-DAP) to meso-diaminopimelate (meso-DAP), a precursor of L-lysine and an essential component of the bacterial peptidoglycan.</text>
</comment>
<comment type="catalytic activity">
    <reaction evidence="1">
        <text>(2S,6S)-2,6-diaminopimelate = meso-2,6-diaminopimelate</text>
        <dbReference type="Rhea" id="RHEA:15393"/>
        <dbReference type="ChEBI" id="CHEBI:57609"/>
        <dbReference type="ChEBI" id="CHEBI:57791"/>
        <dbReference type="EC" id="5.1.1.7"/>
    </reaction>
</comment>
<comment type="pathway">
    <text evidence="1">Amino-acid biosynthesis; L-lysine biosynthesis via DAP pathway; DL-2,6-diaminopimelate from LL-2,6-diaminopimelate: step 1/1.</text>
</comment>
<comment type="subunit">
    <text evidence="1">Homodimer.</text>
</comment>
<comment type="subcellular location">
    <subcellularLocation>
        <location evidence="1">Cytoplasm</location>
    </subcellularLocation>
</comment>
<comment type="similarity">
    <text evidence="1">Belongs to the diaminopimelate epimerase family.</text>
</comment>
<feature type="chain" id="PRO_1000011899" description="Diaminopimelate epimerase">
    <location>
        <begin position="1"/>
        <end position="328"/>
    </location>
</feature>
<feature type="active site" description="Proton donor" evidence="1">
    <location>
        <position position="82"/>
    </location>
</feature>
<feature type="active site" description="Proton acceptor" evidence="1">
    <location>
        <position position="233"/>
    </location>
</feature>
<feature type="binding site" evidence="1">
    <location>
        <position position="14"/>
    </location>
    <ligand>
        <name>substrate</name>
    </ligand>
</feature>
<feature type="binding site" evidence="1">
    <location>
        <position position="73"/>
    </location>
    <ligand>
        <name>substrate</name>
    </ligand>
</feature>
<feature type="binding site" evidence="1">
    <location>
        <begin position="83"/>
        <end position="84"/>
    </location>
    <ligand>
        <name>substrate</name>
    </ligand>
</feature>
<feature type="binding site" evidence="1">
    <location>
        <position position="170"/>
    </location>
    <ligand>
        <name>substrate</name>
    </ligand>
</feature>
<feature type="binding site" evidence="1">
    <location>
        <position position="206"/>
    </location>
    <ligand>
        <name>substrate</name>
    </ligand>
</feature>
<feature type="binding site" evidence="1">
    <location>
        <begin position="224"/>
        <end position="225"/>
    </location>
    <ligand>
        <name>substrate</name>
    </ligand>
</feature>
<feature type="binding site" evidence="1">
    <location>
        <begin position="234"/>
        <end position="235"/>
    </location>
    <ligand>
        <name>substrate</name>
    </ligand>
</feature>
<feature type="site" description="Could be important to modulate the pK values of the two catalytic cysteine residues" evidence="1">
    <location>
        <position position="172"/>
    </location>
</feature>
<feature type="site" description="Could be important to modulate the pK values of the two catalytic cysteine residues" evidence="1">
    <location>
        <position position="224"/>
    </location>
</feature>
<sequence length="328" mass="36147">MAIIHFTKVHGSQNDFFLVDEEENHITAWSDTKRADFAIKLCDRSHSLGGADGILYVAKSNKAGAIGQMRVVNSDGSIASMCGNGLRTVARYLLEKHALTDAKVETMKAILDVRKATSLGFDIPTYQVEISPVKFNPESLPMYVGVEKLFNQVIPELDEELAFSAVSVPNPHLITFVDQTVLDSDKQEKLASFLNSENPYFPDGVNVSFVKRLNEDAIYVRTFERGVGFTNACGTAMSACSLIKKMLDQDTLETPLNVYNDGGRVQVTAKKDETGDISLQLIGNATFVSTGSVRYDDIVTELTNEATVEQAQYQELVQEVKHFLKTTG</sequence>
<protein>
    <recommendedName>
        <fullName evidence="1">Diaminopimelate epimerase</fullName>
        <shortName evidence="1">DAP epimerase</shortName>
        <ecNumber evidence="1">5.1.1.7</ecNumber>
    </recommendedName>
    <alternativeName>
        <fullName evidence="1">PLP-independent amino acid racemase</fullName>
    </alternativeName>
</protein>
<name>DAPF_LISW6</name>
<gene>
    <name evidence="1" type="primary">dapF</name>
    <name type="ordered locus">lwe2038</name>
</gene>
<keyword id="KW-0028">Amino-acid biosynthesis</keyword>
<keyword id="KW-0963">Cytoplasm</keyword>
<keyword id="KW-0413">Isomerase</keyword>
<keyword id="KW-0457">Lysine biosynthesis</keyword>
<proteinExistence type="inferred from homology"/>
<evidence type="ECO:0000255" key="1">
    <source>
        <dbReference type="HAMAP-Rule" id="MF_00197"/>
    </source>
</evidence>
<organism>
    <name type="scientific">Listeria welshimeri serovar 6b (strain ATCC 35897 / DSM 20650 / CCUG 15529 / CIP 8149 / NCTC 11857 / SLCC 5334 / V8)</name>
    <dbReference type="NCBI Taxonomy" id="386043"/>
    <lineage>
        <taxon>Bacteria</taxon>
        <taxon>Bacillati</taxon>
        <taxon>Bacillota</taxon>
        <taxon>Bacilli</taxon>
        <taxon>Bacillales</taxon>
        <taxon>Listeriaceae</taxon>
        <taxon>Listeria</taxon>
    </lineage>
</organism>
<accession>A0AKC4</accession>
<reference key="1">
    <citation type="journal article" date="2006" name="J. Bacteriol.">
        <title>Whole-genome sequence of Listeria welshimeri reveals common steps in genome reduction with Listeria innocua as compared to Listeria monocytogenes.</title>
        <authorList>
            <person name="Hain T."/>
            <person name="Steinweg C."/>
            <person name="Kuenne C.T."/>
            <person name="Billion A."/>
            <person name="Ghai R."/>
            <person name="Chatterjee S.S."/>
            <person name="Domann E."/>
            <person name="Kaerst U."/>
            <person name="Goesmann A."/>
            <person name="Bekel T."/>
            <person name="Bartels D."/>
            <person name="Kaiser O."/>
            <person name="Meyer F."/>
            <person name="Puehler A."/>
            <person name="Weisshaar B."/>
            <person name="Wehland J."/>
            <person name="Liang C."/>
            <person name="Dandekar T."/>
            <person name="Lampidis R."/>
            <person name="Kreft J."/>
            <person name="Goebel W."/>
            <person name="Chakraborty T."/>
        </authorList>
    </citation>
    <scope>NUCLEOTIDE SEQUENCE [LARGE SCALE GENOMIC DNA]</scope>
    <source>
        <strain>ATCC 35897 / DSM 20650 / CCUG 15529 / CIP 8149 / NCTC 11857 / SLCC 5334 / V8</strain>
    </source>
</reference>
<dbReference type="EC" id="5.1.1.7" evidence="1"/>
<dbReference type="EMBL" id="AM263198">
    <property type="protein sequence ID" value="CAK21456.1"/>
    <property type="molecule type" value="Genomic_DNA"/>
</dbReference>
<dbReference type="RefSeq" id="WP_011702802.1">
    <property type="nucleotide sequence ID" value="NC_008555.1"/>
</dbReference>
<dbReference type="SMR" id="A0AKC4"/>
<dbReference type="STRING" id="386043.lwe2038"/>
<dbReference type="GeneID" id="61189938"/>
<dbReference type="KEGG" id="lwe:lwe2038"/>
<dbReference type="eggNOG" id="COG0253">
    <property type="taxonomic scope" value="Bacteria"/>
</dbReference>
<dbReference type="HOGENOM" id="CLU_053306_3_1_9"/>
<dbReference type="OrthoDB" id="9805408at2"/>
<dbReference type="UniPathway" id="UPA00034">
    <property type="reaction ID" value="UER00025"/>
</dbReference>
<dbReference type="Proteomes" id="UP000000779">
    <property type="component" value="Chromosome"/>
</dbReference>
<dbReference type="GO" id="GO:0005829">
    <property type="term" value="C:cytosol"/>
    <property type="evidence" value="ECO:0007669"/>
    <property type="project" value="TreeGrafter"/>
</dbReference>
<dbReference type="GO" id="GO:0008837">
    <property type="term" value="F:diaminopimelate epimerase activity"/>
    <property type="evidence" value="ECO:0007669"/>
    <property type="project" value="UniProtKB-UniRule"/>
</dbReference>
<dbReference type="GO" id="GO:0009089">
    <property type="term" value="P:lysine biosynthetic process via diaminopimelate"/>
    <property type="evidence" value="ECO:0007669"/>
    <property type="project" value="UniProtKB-UniRule"/>
</dbReference>
<dbReference type="Gene3D" id="3.10.310.10">
    <property type="entry name" value="Diaminopimelate Epimerase, Chain A, domain 1"/>
    <property type="match status" value="2"/>
</dbReference>
<dbReference type="HAMAP" id="MF_00197">
    <property type="entry name" value="DAP_epimerase"/>
    <property type="match status" value="1"/>
</dbReference>
<dbReference type="InterPro" id="IPR018510">
    <property type="entry name" value="DAP_epimerase_AS"/>
</dbReference>
<dbReference type="InterPro" id="IPR001653">
    <property type="entry name" value="DAP_epimerase_DapF"/>
</dbReference>
<dbReference type="NCBIfam" id="TIGR00652">
    <property type="entry name" value="DapF"/>
    <property type="match status" value="1"/>
</dbReference>
<dbReference type="PANTHER" id="PTHR31689:SF0">
    <property type="entry name" value="DIAMINOPIMELATE EPIMERASE"/>
    <property type="match status" value="1"/>
</dbReference>
<dbReference type="PANTHER" id="PTHR31689">
    <property type="entry name" value="DIAMINOPIMELATE EPIMERASE, CHLOROPLASTIC"/>
    <property type="match status" value="1"/>
</dbReference>
<dbReference type="Pfam" id="PF01678">
    <property type="entry name" value="DAP_epimerase"/>
    <property type="match status" value="2"/>
</dbReference>
<dbReference type="SUPFAM" id="SSF54506">
    <property type="entry name" value="Diaminopimelate epimerase-like"/>
    <property type="match status" value="2"/>
</dbReference>
<dbReference type="PROSITE" id="PS01326">
    <property type="entry name" value="DAP_EPIMERASE"/>
    <property type="match status" value="1"/>
</dbReference>